<reference key="1">
    <citation type="journal article" date="1995" name="EMBO J.">
        <title>The transketolase gene family of the resurrection plant Craterostigma plantagineum: differential expression during the rehydration phase.</title>
        <authorList>
            <person name="Bernacchia G."/>
            <person name="Schwall G."/>
            <person name="Lottspeich F."/>
            <person name="Salamini F."/>
            <person name="Bartels D."/>
        </authorList>
    </citation>
    <scope>NUCLEOTIDE SEQUENCE [MRNA]</scope>
</reference>
<name>TKT7_CRAPL</name>
<dbReference type="EC" id="2.2.1.1"/>
<dbReference type="EMBL" id="Z46648">
    <property type="protein sequence ID" value="CAA86609.1"/>
    <property type="molecule type" value="mRNA"/>
</dbReference>
<dbReference type="PIR" id="S54301">
    <property type="entry name" value="S54301"/>
</dbReference>
<dbReference type="SMR" id="Q42677"/>
<dbReference type="GO" id="GO:0005829">
    <property type="term" value="C:cytosol"/>
    <property type="evidence" value="ECO:0007669"/>
    <property type="project" value="TreeGrafter"/>
</dbReference>
<dbReference type="GO" id="GO:0046872">
    <property type="term" value="F:metal ion binding"/>
    <property type="evidence" value="ECO:0007669"/>
    <property type="project" value="UniProtKB-KW"/>
</dbReference>
<dbReference type="GO" id="GO:0004802">
    <property type="term" value="F:transketolase activity"/>
    <property type="evidence" value="ECO:0007669"/>
    <property type="project" value="UniProtKB-EC"/>
</dbReference>
<dbReference type="GO" id="GO:0006098">
    <property type="term" value="P:pentose-phosphate shunt"/>
    <property type="evidence" value="ECO:0007669"/>
    <property type="project" value="TreeGrafter"/>
</dbReference>
<dbReference type="CDD" id="cd07033">
    <property type="entry name" value="TPP_PYR_DXS_TK_like"/>
    <property type="match status" value="1"/>
</dbReference>
<dbReference type="CDD" id="cd02012">
    <property type="entry name" value="TPP_TK"/>
    <property type="match status" value="1"/>
</dbReference>
<dbReference type="FunFam" id="3.40.50.920:FF:000003">
    <property type="entry name" value="Transketolase"/>
    <property type="match status" value="1"/>
</dbReference>
<dbReference type="FunFam" id="3.40.50.970:FF:000003">
    <property type="entry name" value="Transketolase"/>
    <property type="match status" value="1"/>
</dbReference>
<dbReference type="FunFam" id="3.40.50.970:FF:000004">
    <property type="entry name" value="Transketolase"/>
    <property type="match status" value="1"/>
</dbReference>
<dbReference type="Gene3D" id="3.40.50.920">
    <property type="match status" value="1"/>
</dbReference>
<dbReference type="Gene3D" id="3.40.50.970">
    <property type="match status" value="2"/>
</dbReference>
<dbReference type="InterPro" id="IPR029061">
    <property type="entry name" value="THDP-binding"/>
</dbReference>
<dbReference type="InterPro" id="IPR009014">
    <property type="entry name" value="Transketo_C/PFOR_II"/>
</dbReference>
<dbReference type="InterPro" id="IPR055152">
    <property type="entry name" value="Transketolase-like_C_2"/>
</dbReference>
<dbReference type="InterPro" id="IPR005475">
    <property type="entry name" value="Transketolase-like_Pyr-bd"/>
</dbReference>
<dbReference type="InterPro" id="IPR005478">
    <property type="entry name" value="Transketolase_bac-like"/>
</dbReference>
<dbReference type="InterPro" id="IPR020826">
    <property type="entry name" value="Transketolase_BS"/>
</dbReference>
<dbReference type="InterPro" id="IPR049557">
    <property type="entry name" value="Transketolase_CS"/>
</dbReference>
<dbReference type="InterPro" id="IPR033247">
    <property type="entry name" value="Transketolase_fam"/>
</dbReference>
<dbReference type="InterPro" id="IPR005474">
    <property type="entry name" value="Transketolase_N"/>
</dbReference>
<dbReference type="NCBIfam" id="TIGR00232">
    <property type="entry name" value="tktlase_bact"/>
    <property type="match status" value="1"/>
</dbReference>
<dbReference type="PANTHER" id="PTHR43522">
    <property type="entry name" value="TRANSKETOLASE"/>
    <property type="match status" value="1"/>
</dbReference>
<dbReference type="PANTHER" id="PTHR43522:SF2">
    <property type="entry name" value="TRANSKETOLASE 1-RELATED"/>
    <property type="match status" value="1"/>
</dbReference>
<dbReference type="Pfam" id="PF02779">
    <property type="entry name" value="Transket_pyr"/>
    <property type="match status" value="1"/>
</dbReference>
<dbReference type="Pfam" id="PF22613">
    <property type="entry name" value="Transketolase_C_1"/>
    <property type="match status" value="1"/>
</dbReference>
<dbReference type="Pfam" id="PF00456">
    <property type="entry name" value="Transketolase_N"/>
    <property type="match status" value="1"/>
</dbReference>
<dbReference type="SMART" id="SM00861">
    <property type="entry name" value="Transket_pyr"/>
    <property type="match status" value="1"/>
</dbReference>
<dbReference type="SUPFAM" id="SSF52518">
    <property type="entry name" value="Thiamin diphosphate-binding fold (THDP-binding)"/>
    <property type="match status" value="2"/>
</dbReference>
<dbReference type="SUPFAM" id="SSF52922">
    <property type="entry name" value="TK C-terminal domain-like"/>
    <property type="match status" value="1"/>
</dbReference>
<dbReference type="PROSITE" id="PS00801">
    <property type="entry name" value="TRANSKETOLASE_1"/>
    <property type="match status" value="1"/>
</dbReference>
<dbReference type="PROSITE" id="PS00802">
    <property type="entry name" value="TRANSKETOLASE_2"/>
    <property type="match status" value="1"/>
</dbReference>
<evidence type="ECO:0000250" key="1"/>
<evidence type="ECO:0000305" key="2"/>
<proteinExistence type="evidence at transcript level"/>
<organism>
    <name type="scientific">Craterostigma plantagineum</name>
    <name type="common">Blue gem</name>
    <name type="synonym">Torenia plantagineum</name>
    <dbReference type="NCBI Taxonomy" id="4153"/>
    <lineage>
        <taxon>Eukaryota</taxon>
        <taxon>Viridiplantae</taxon>
        <taxon>Streptophyta</taxon>
        <taxon>Embryophyta</taxon>
        <taxon>Tracheophyta</taxon>
        <taxon>Spermatophyta</taxon>
        <taxon>Magnoliopsida</taxon>
        <taxon>eudicotyledons</taxon>
        <taxon>Gunneridae</taxon>
        <taxon>Pentapetalae</taxon>
        <taxon>asterids</taxon>
        <taxon>lamiids</taxon>
        <taxon>Lamiales</taxon>
        <taxon>Linderniaceae</taxon>
        <taxon>Craterostigma</taxon>
    </lineage>
</organism>
<accession>Q42677</accession>
<gene>
    <name type="primary">TKT7</name>
</gene>
<sequence length="676" mass="73410">MAPKTTLIAEPELVSKSVNTIRFLAIDAVEKAKSGHPGMPMGCAPMGHVLYDEFMRFNPKNPYWFNRDRFVLSAGHGCMLQYALLHLSGYDSVKEEDLKSLRQWGSRTPAHPENFETPGVEVTTGPLGQGIASAVGLAVAEKHLAARYNKPGFEIVDHYTYVILGDGCQMEGVSNEACSLAAHWGLGKLIALYDDNHITIDGDTDVAFTEDVDKRFDALGWHVIWVKNGNDGCDEIRAAIEEAKSVKDRPTMIKVTTTIGYGAPSKANTYGVHGNALGPKEAEATRKNLGWPYEPFHVPDDVKKHWSRHIAEGAALESAWNAKFAEFQKKFPEEAADLKSIITGELPTNWESIFPTYTPENPGLPTRTLSHQILNGLGDVLPGLLGGSADLTLSNMAFLKNSGDFQKKSPGERNVKFGAREHAMGSICNGLALHSPGLLPYCATYFVFTDYMRAAMRISALSKARVLYIMTHDSIGLGEDGPTHQPVEHLASFRAMPNILTLRPADGNETAGAYRAAVQNGERPSILVLARQKLPQLPGTSIEGVSKGGYVISDNSRGGNSKPDVILIGTGSELEIAARAGDELRKEGKKVRVVSLVCWELFAEQSEKYRETVLPSGVTARVSVEAGSTFGWERFIGPKGKAVGIDRFGASAPAERLFKEFGITVEAVVAAAKEIC</sequence>
<feature type="chain" id="PRO_0000191907" description="Transketolase 7">
    <location>
        <begin position="1"/>
        <end position="676"/>
    </location>
</feature>
<feature type="active site" description="Proton donor" evidence="1">
    <location>
        <position position="421"/>
    </location>
</feature>
<feature type="binding site" evidence="1">
    <location>
        <position position="36"/>
    </location>
    <ligand>
        <name>substrate</name>
    </ligand>
</feature>
<feature type="binding site" evidence="1">
    <location>
        <position position="76"/>
    </location>
    <ligand>
        <name>thiamine diphosphate</name>
        <dbReference type="ChEBI" id="CHEBI:58937"/>
    </ligand>
</feature>
<feature type="binding site" evidence="1">
    <location>
        <begin position="125"/>
        <end position="127"/>
    </location>
    <ligand>
        <name>thiamine diphosphate</name>
        <dbReference type="ChEBI" id="CHEBI:58937"/>
    </ligand>
</feature>
<feature type="binding site" evidence="1">
    <location>
        <position position="166"/>
    </location>
    <ligand>
        <name>Mg(2+)</name>
        <dbReference type="ChEBI" id="CHEBI:18420"/>
    </ligand>
</feature>
<feature type="binding site" evidence="1">
    <location>
        <position position="167"/>
    </location>
    <ligand>
        <name>thiamine diphosphate</name>
        <dbReference type="ChEBI" id="CHEBI:58937"/>
    </ligand>
</feature>
<feature type="binding site" evidence="1">
    <location>
        <position position="196"/>
    </location>
    <ligand>
        <name>Mg(2+)</name>
        <dbReference type="ChEBI" id="CHEBI:18420"/>
    </ligand>
</feature>
<feature type="binding site" evidence="1">
    <location>
        <position position="196"/>
    </location>
    <ligand>
        <name>thiamine diphosphate</name>
        <dbReference type="ChEBI" id="CHEBI:58937"/>
    </ligand>
</feature>
<feature type="binding site" evidence="1">
    <location>
        <position position="198"/>
    </location>
    <ligand>
        <name>Mg(2+)</name>
        <dbReference type="ChEBI" id="CHEBI:18420"/>
    </ligand>
</feature>
<feature type="binding site" evidence="1">
    <location>
        <position position="273"/>
    </location>
    <ligand>
        <name>substrate</name>
    </ligand>
</feature>
<feature type="binding site" evidence="1">
    <location>
        <position position="273"/>
    </location>
    <ligand>
        <name>thiamine diphosphate</name>
        <dbReference type="ChEBI" id="CHEBI:58937"/>
    </ligand>
</feature>
<feature type="binding site" evidence="1">
    <location>
        <position position="367"/>
    </location>
    <ligand>
        <name>substrate</name>
    </ligand>
</feature>
<feature type="binding site" evidence="1">
    <location>
        <position position="394"/>
    </location>
    <ligand>
        <name>substrate</name>
    </ligand>
</feature>
<feature type="binding site" evidence="1">
    <location>
        <position position="421"/>
    </location>
    <ligand>
        <name>thiamine diphosphate</name>
        <dbReference type="ChEBI" id="CHEBI:58937"/>
    </ligand>
</feature>
<feature type="binding site" evidence="1">
    <location>
        <position position="448"/>
    </location>
    <ligand>
        <name>thiamine diphosphate</name>
        <dbReference type="ChEBI" id="CHEBI:58937"/>
    </ligand>
</feature>
<feature type="binding site" evidence="1">
    <location>
        <position position="472"/>
    </location>
    <ligand>
        <name>substrate</name>
    </ligand>
</feature>
<feature type="binding site" evidence="1">
    <location>
        <position position="480"/>
    </location>
    <ligand>
        <name>substrate</name>
    </ligand>
</feature>
<feature type="binding site" evidence="1">
    <location>
        <position position="531"/>
    </location>
    <ligand>
        <name>substrate</name>
    </ligand>
</feature>
<feature type="site" description="Important for catalytic activity" evidence="1">
    <location>
        <position position="36"/>
    </location>
</feature>
<feature type="site" description="Important for catalytic activity" evidence="1">
    <location>
        <position position="273"/>
    </location>
</feature>
<protein>
    <recommendedName>
        <fullName>Transketolase 7</fullName>
        <shortName>TK</shortName>
        <ecNumber>2.2.1.1</ecNumber>
    </recommendedName>
</protein>
<keyword id="KW-0106">Calcium</keyword>
<keyword id="KW-0460">Magnesium</keyword>
<keyword id="KW-0479">Metal-binding</keyword>
<keyword id="KW-0786">Thiamine pyrophosphate</keyword>
<keyword id="KW-0808">Transferase</keyword>
<comment type="function">
    <text>Could be involved in the conversion of sugars, which are a major phenomenon in the rehydration process.</text>
</comment>
<comment type="function">
    <text evidence="1">Catalyzes the transfer of a two-carbon ketol group from a ketose donor to an aldose acceptor, via a covalent intermediate with the cofactor thiamine pyrophosphate.</text>
</comment>
<comment type="catalytic activity">
    <reaction>
        <text>D-sedoheptulose 7-phosphate + D-glyceraldehyde 3-phosphate = aldehydo-D-ribose 5-phosphate + D-xylulose 5-phosphate</text>
        <dbReference type="Rhea" id="RHEA:10508"/>
        <dbReference type="ChEBI" id="CHEBI:57483"/>
        <dbReference type="ChEBI" id="CHEBI:57737"/>
        <dbReference type="ChEBI" id="CHEBI:58273"/>
        <dbReference type="ChEBI" id="CHEBI:59776"/>
        <dbReference type="EC" id="2.2.1.1"/>
    </reaction>
</comment>
<comment type="cofactor">
    <cofactor evidence="1">
        <name>Mg(2+)</name>
        <dbReference type="ChEBI" id="CHEBI:18420"/>
    </cofactor>
    <cofactor evidence="1">
        <name>Ca(2+)</name>
        <dbReference type="ChEBI" id="CHEBI:29108"/>
    </cofactor>
    <cofactor evidence="1">
        <name>Mn(2+)</name>
        <dbReference type="ChEBI" id="CHEBI:29035"/>
    </cofactor>
    <cofactor evidence="1">
        <name>Co(2+)</name>
        <dbReference type="ChEBI" id="CHEBI:48828"/>
    </cofactor>
    <text evidence="1">Binds 1 Mg(2+) ion per subunit. Can also utilize other divalent metal cations, such as Ca(2+), Mn(2+) and Co(2+).</text>
</comment>
<comment type="cofactor">
    <cofactor evidence="1">
        <name>thiamine diphosphate</name>
        <dbReference type="ChEBI" id="CHEBI:58937"/>
    </cofactor>
    <text evidence="1">Binds 1 thiamine pyrophosphate per subunit.</text>
</comment>
<comment type="subunit">
    <text evidence="1">Homodimer.</text>
</comment>
<comment type="tissue specificity">
    <text>Leaves and roots.</text>
</comment>
<comment type="induction">
    <text>By rehydration.</text>
</comment>
<comment type="similarity">
    <text evidence="2">Belongs to the transketolase family.</text>
</comment>